<evidence type="ECO:0000250" key="1">
    <source>
        <dbReference type="UniProtKB" id="O22317"/>
    </source>
</evidence>
<evidence type="ECO:0000255" key="2"/>
<evidence type="ECO:0000269" key="3">
    <source>
    </source>
</evidence>
<evidence type="ECO:0000269" key="4">
    <source>
    </source>
</evidence>
<evidence type="ECO:0000269" key="5">
    <source>
    </source>
</evidence>
<evidence type="ECO:0000305" key="6"/>
<organism>
    <name type="scientific">Saccharomyces cerevisiae (strain ATCC 204508 / S288c)</name>
    <name type="common">Baker's yeast</name>
    <dbReference type="NCBI Taxonomy" id="559292"/>
    <lineage>
        <taxon>Eukaryota</taxon>
        <taxon>Fungi</taxon>
        <taxon>Dikarya</taxon>
        <taxon>Ascomycota</taxon>
        <taxon>Saccharomycotina</taxon>
        <taxon>Saccharomycetes</taxon>
        <taxon>Saccharomycetales</taxon>
        <taxon>Saccharomycetaceae</taxon>
        <taxon>Saccharomyces</taxon>
    </lineage>
</organism>
<feature type="signal peptide" evidence="4 5">
    <location>
        <begin position="1"/>
        <end position="23"/>
    </location>
</feature>
<feature type="chain" id="PRO_0000011896" description="Glucan 1,3-beta-glucosidase">
    <location>
        <begin position="24"/>
        <end position="313"/>
    </location>
</feature>
<feature type="active site" description="Proton donor" evidence="1">
    <location>
        <position position="124"/>
    </location>
</feature>
<feature type="active site" description="Nucleophile" evidence="1">
    <location>
        <position position="233"/>
    </location>
</feature>
<feature type="glycosylation site" description="N-linked (GlcNAc...) asparagine" evidence="2">
    <location>
        <position position="202"/>
    </location>
</feature>
<feature type="glycosylation site" description="N-linked (GlcNAc...) asparagine" evidence="2">
    <location>
        <position position="284"/>
    </location>
</feature>
<sequence length="313" mass="34119">MRFSTTLATAATALFFTASQVSAIGELAFNLGVKNNDGTCKSTSDYETELQALKSYTSTVKVYAASDCNTLQNLGPAAEAEGFTIFVGVWPTDDSHYAAEKAALQTYLPKIKESTVAGFLVGSEALYRNDLTASQLSDKINDVRSVVADISDSDGKSYSGKQVGTVDSWNVLVAGYNSAVIEASDFVMANAFSYWQGQTMQNASYSFFDDIMQALQVIQSTKGSTDITFWVGETGWPTDGTNFESSYPSVDNAKQFWKEGICSMRAWGVNVIVFEAFDEDWKPNTSGTSDVEKHWGVFTSSDNLKYSLDCDFS</sequence>
<name>BGL2_YEAST</name>
<accession>P15703</accession>
<accession>D6VV59</accession>
<comment type="function">
    <text>Glucanases possibly play a role in cell expansion during growth, in cell-cell fusion during mating, and in spore release during sporulation. This enzyme may be involved in beta-glucan degradation and also function biosynthetically as a transglycosylase.</text>
</comment>
<comment type="catalytic activity">
    <reaction>
        <text>Successive hydrolysis of beta-D-glucose units from the non-reducing ends of (1-&gt;3)-beta-D-glucans, releasing alpha-glucose.</text>
        <dbReference type="EC" id="3.2.1.58"/>
    </reaction>
</comment>
<comment type="subcellular location">
    <subcellularLocation>
        <location evidence="5">Secreted</location>
        <location evidence="5">Cell wall</location>
    </subcellularLocation>
    <text>Tightly bound to cell wall.</text>
</comment>
<comment type="miscellaneous">
    <text>This protein strongly binds to glucan and chitin.</text>
</comment>
<comment type="miscellaneous">
    <text evidence="3">Present with 45000 molecules/cell in log phase SD medium.</text>
</comment>
<comment type="similarity">
    <text evidence="6">Belongs to the glycosyl hydrolase 17 family.</text>
</comment>
<gene>
    <name type="primary">BGL2</name>
    <name type="synonym">SCW9</name>
    <name type="ordered locus">YGR282C</name>
</gene>
<proteinExistence type="evidence at protein level"/>
<keyword id="KW-0134">Cell wall</keyword>
<keyword id="KW-0961">Cell wall biogenesis/degradation</keyword>
<keyword id="KW-0147">Chitin-binding</keyword>
<keyword id="KW-0903">Direct protein sequencing</keyword>
<keyword id="KW-0325">Glycoprotein</keyword>
<keyword id="KW-0326">Glycosidase</keyword>
<keyword id="KW-0378">Hydrolase</keyword>
<keyword id="KW-1185">Reference proteome</keyword>
<keyword id="KW-0964">Secreted</keyword>
<keyword id="KW-0732">Signal</keyword>
<protein>
    <recommendedName>
        <fullName>Glucan 1,3-beta-glucosidase</fullName>
        <ecNumber>3.2.1.58</ecNumber>
    </recommendedName>
    <alternativeName>
        <fullName>Exo-1,3-beta-glucanase</fullName>
    </alternativeName>
    <alternativeName>
        <fullName>GP29</fullName>
    </alternativeName>
    <alternativeName>
        <fullName>Soluble cell wall protein 9</fullName>
    </alternativeName>
</protein>
<dbReference type="EC" id="3.2.1.58"/>
<dbReference type="EMBL" id="M31072">
    <property type="protein sequence ID" value="AAA34648.1"/>
    <property type="molecule type" value="Genomic_DNA"/>
</dbReference>
<dbReference type="EMBL" id="Z73067">
    <property type="protein sequence ID" value="CAA97313.1"/>
    <property type="molecule type" value="Genomic_DNA"/>
</dbReference>
<dbReference type="EMBL" id="AY558101">
    <property type="protein sequence ID" value="AAS56427.1"/>
    <property type="molecule type" value="Genomic_DNA"/>
</dbReference>
<dbReference type="EMBL" id="BK006941">
    <property type="protein sequence ID" value="DAA08370.1"/>
    <property type="molecule type" value="Genomic_DNA"/>
</dbReference>
<dbReference type="PIR" id="A33499">
    <property type="entry name" value="A33499"/>
</dbReference>
<dbReference type="RefSeq" id="NP_011798.1">
    <property type="nucleotide sequence ID" value="NM_001181411.1"/>
</dbReference>
<dbReference type="SMR" id="P15703"/>
<dbReference type="BioGRID" id="33532">
    <property type="interactions" value="159"/>
</dbReference>
<dbReference type="DIP" id="DIP-6341N"/>
<dbReference type="FunCoup" id="P15703">
    <property type="interactions" value="559"/>
</dbReference>
<dbReference type="IntAct" id="P15703">
    <property type="interactions" value="39"/>
</dbReference>
<dbReference type="MINT" id="P15703"/>
<dbReference type="STRING" id="4932.YGR282C"/>
<dbReference type="CAZy" id="GH17">
    <property type="family name" value="Glycoside Hydrolase Family 17"/>
</dbReference>
<dbReference type="GlyCosmos" id="P15703">
    <property type="glycosylation" value="2 sites, No reported glycans"/>
</dbReference>
<dbReference type="GlyGen" id="P15703">
    <property type="glycosylation" value="3 sites"/>
</dbReference>
<dbReference type="iPTMnet" id="P15703"/>
<dbReference type="PaxDb" id="4932-YGR282C"/>
<dbReference type="PeptideAtlas" id="P15703"/>
<dbReference type="EnsemblFungi" id="YGR282C_mRNA">
    <property type="protein sequence ID" value="YGR282C"/>
    <property type="gene ID" value="YGR282C"/>
</dbReference>
<dbReference type="GeneID" id="853199"/>
<dbReference type="KEGG" id="sce:YGR282C"/>
<dbReference type="AGR" id="SGD:S000003514"/>
<dbReference type="SGD" id="S000003514">
    <property type="gene designation" value="BGL2"/>
</dbReference>
<dbReference type="VEuPathDB" id="FungiDB:YGR282C"/>
<dbReference type="eggNOG" id="ENOG502QQE6">
    <property type="taxonomic scope" value="Eukaryota"/>
</dbReference>
<dbReference type="GeneTree" id="ENSGT00940000176321"/>
<dbReference type="HOGENOM" id="CLU_028820_2_0_1"/>
<dbReference type="InParanoid" id="P15703"/>
<dbReference type="OMA" id="EGICAMR"/>
<dbReference type="OrthoDB" id="1293114at2759"/>
<dbReference type="BioCyc" id="YEAST:YGR282C-MONOMER"/>
<dbReference type="BioGRID-ORCS" id="853199">
    <property type="hits" value="0 hits in 10 CRISPR screens"/>
</dbReference>
<dbReference type="PRO" id="PR:P15703"/>
<dbReference type="Proteomes" id="UP000002311">
    <property type="component" value="Chromosome VII"/>
</dbReference>
<dbReference type="RNAct" id="P15703">
    <property type="molecule type" value="protein"/>
</dbReference>
<dbReference type="GO" id="GO:0009986">
    <property type="term" value="C:cell surface"/>
    <property type="evidence" value="ECO:0000318"/>
    <property type="project" value="GO_Central"/>
</dbReference>
<dbReference type="GO" id="GO:0005576">
    <property type="term" value="C:extracellular region"/>
    <property type="evidence" value="ECO:0000318"/>
    <property type="project" value="GO_Central"/>
</dbReference>
<dbReference type="GO" id="GO:0009277">
    <property type="term" value="C:fungal-type cell wall"/>
    <property type="evidence" value="ECO:0000314"/>
    <property type="project" value="SGD"/>
</dbReference>
<dbReference type="GO" id="GO:0000324">
    <property type="term" value="C:fungal-type vacuole"/>
    <property type="evidence" value="ECO:0007005"/>
    <property type="project" value="SGD"/>
</dbReference>
<dbReference type="GO" id="GO:0008061">
    <property type="term" value="F:chitin binding"/>
    <property type="evidence" value="ECO:0007669"/>
    <property type="project" value="UniProtKB-KW"/>
</dbReference>
<dbReference type="GO" id="GO:0042973">
    <property type="term" value="F:glucan endo-1,3-beta-D-glucosidase activity"/>
    <property type="evidence" value="ECO:0000314"/>
    <property type="project" value="SGD"/>
</dbReference>
<dbReference type="GO" id="GO:0004338">
    <property type="term" value="F:glucan exo-1,3-beta-glucosidase activity"/>
    <property type="evidence" value="ECO:0007669"/>
    <property type="project" value="UniProtKB-EC"/>
</dbReference>
<dbReference type="GO" id="GO:0005975">
    <property type="term" value="P:carbohydrate metabolic process"/>
    <property type="evidence" value="ECO:0007669"/>
    <property type="project" value="InterPro"/>
</dbReference>
<dbReference type="GO" id="GO:0071555">
    <property type="term" value="P:cell wall organization"/>
    <property type="evidence" value="ECO:0000318"/>
    <property type="project" value="GO_Central"/>
</dbReference>
<dbReference type="GO" id="GO:0031505">
    <property type="term" value="P:fungal-type cell wall organization"/>
    <property type="evidence" value="ECO:0000316"/>
    <property type="project" value="SGD"/>
</dbReference>
<dbReference type="FunFam" id="3.20.20.80:FF:000105">
    <property type="entry name" value="Glucan 1,3-beta-glucosidase"/>
    <property type="match status" value="1"/>
</dbReference>
<dbReference type="Gene3D" id="3.20.20.80">
    <property type="entry name" value="Glycosidases"/>
    <property type="match status" value="1"/>
</dbReference>
<dbReference type="InterPro" id="IPR050732">
    <property type="entry name" value="Beta-glucan_modifiers"/>
</dbReference>
<dbReference type="InterPro" id="IPR000490">
    <property type="entry name" value="Glyco_hydro_17"/>
</dbReference>
<dbReference type="InterPro" id="IPR017853">
    <property type="entry name" value="Glycoside_hydrolase_SF"/>
</dbReference>
<dbReference type="PANTHER" id="PTHR16631">
    <property type="entry name" value="GLUCAN 1,3-BETA-GLUCOSIDASE"/>
    <property type="match status" value="1"/>
</dbReference>
<dbReference type="PANTHER" id="PTHR16631:SF26">
    <property type="entry name" value="GLUCAN 1,3-BETA-GLUCOSIDASE"/>
    <property type="match status" value="1"/>
</dbReference>
<dbReference type="Pfam" id="PF00332">
    <property type="entry name" value="Glyco_hydro_17"/>
    <property type="match status" value="1"/>
</dbReference>
<dbReference type="SUPFAM" id="SSF51445">
    <property type="entry name" value="(Trans)glycosidases"/>
    <property type="match status" value="1"/>
</dbReference>
<dbReference type="PROSITE" id="PS00587">
    <property type="entry name" value="GLYCOSYL_HYDROL_F17"/>
    <property type="match status" value="1"/>
</dbReference>
<reference key="1">
    <citation type="journal article" date="1989" name="J. Bacteriol.">
        <title>Molecular cloning of a cell wall exo-beta-1,3-glucanase from Saccharomyces cerevisiae.</title>
        <authorList>
            <person name="Klebl F."/>
            <person name="Tanner W."/>
        </authorList>
    </citation>
    <scope>NUCLEOTIDE SEQUENCE [GENOMIC DNA]</scope>
    <scope>PARTIAL PROTEIN SEQUENCE</scope>
</reference>
<reference key="2">
    <citation type="journal article" date="1997" name="Yeast">
        <title>Sequence analysis of a near-subtelomeric 35.4 kb DNA segment on the right arm of chromosome VII from Saccharomyces cerevisiae carrying the MAL1 locus reveals 15 complete open reading frames, including ZUO1, BGL2 and BIO2 genes and an ABC transporter gene.</title>
        <authorList>
            <person name="Volckaert G."/>
            <person name="Voet M."/>
            <person name="Robben J."/>
        </authorList>
    </citation>
    <scope>NUCLEOTIDE SEQUENCE [GENOMIC DNA]</scope>
    <source>
        <strain>ATCC 96604 / S288c / FY1679</strain>
    </source>
</reference>
<reference key="3">
    <citation type="journal article" date="1997" name="Nature">
        <title>The nucleotide sequence of Saccharomyces cerevisiae chromosome VII.</title>
        <authorList>
            <person name="Tettelin H."/>
            <person name="Agostoni-Carbone M.L."/>
            <person name="Albermann K."/>
            <person name="Albers M."/>
            <person name="Arroyo J."/>
            <person name="Backes U."/>
            <person name="Barreiros T."/>
            <person name="Bertani I."/>
            <person name="Bjourson A.J."/>
            <person name="Brueckner M."/>
            <person name="Bruschi C.V."/>
            <person name="Carignani G."/>
            <person name="Castagnoli L."/>
            <person name="Cerdan E."/>
            <person name="Clemente M.L."/>
            <person name="Coblenz A."/>
            <person name="Coglievina M."/>
            <person name="Coissac E."/>
            <person name="Defoor E."/>
            <person name="Del Bino S."/>
            <person name="Delius H."/>
            <person name="Delneri D."/>
            <person name="de Wergifosse P."/>
            <person name="Dujon B."/>
            <person name="Durand P."/>
            <person name="Entian K.-D."/>
            <person name="Eraso P."/>
            <person name="Escribano V."/>
            <person name="Fabiani L."/>
            <person name="Fartmann B."/>
            <person name="Feroli F."/>
            <person name="Feuermann M."/>
            <person name="Frontali L."/>
            <person name="Garcia-Gonzalez M."/>
            <person name="Garcia-Saez M.I."/>
            <person name="Goffeau A."/>
            <person name="Guerreiro P."/>
            <person name="Hani J."/>
            <person name="Hansen M."/>
            <person name="Hebling U."/>
            <person name="Hernandez K."/>
            <person name="Heumann K."/>
            <person name="Hilger F."/>
            <person name="Hofmann B."/>
            <person name="Indge K.J."/>
            <person name="James C.M."/>
            <person name="Klima R."/>
            <person name="Koetter P."/>
            <person name="Kramer B."/>
            <person name="Kramer W."/>
            <person name="Lauquin G."/>
            <person name="Leuther H."/>
            <person name="Louis E.J."/>
            <person name="Maillier E."/>
            <person name="Marconi A."/>
            <person name="Martegani E."/>
            <person name="Mazon M.J."/>
            <person name="Mazzoni C."/>
            <person name="McReynolds A.D.K."/>
            <person name="Melchioretto P."/>
            <person name="Mewes H.-W."/>
            <person name="Minenkova O."/>
            <person name="Mueller-Auer S."/>
            <person name="Nawrocki A."/>
            <person name="Netter P."/>
            <person name="Neu R."/>
            <person name="Nombela C."/>
            <person name="Oliver S.G."/>
            <person name="Panzeri L."/>
            <person name="Paoluzi S."/>
            <person name="Plevani P."/>
            <person name="Portetelle D."/>
            <person name="Portillo F."/>
            <person name="Potier S."/>
            <person name="Purnelle B."/>
            <person name="Rieger M."/>
            <person name="Riles L."/>
            <person name="Rinaldi T."/>
            <person name="Robben J."/>
            <person name="Rodrigues-Pousada C."/>
            <person name="Rodriguez-Belmonte E."/>
            <person name="Rodriguez-Torres A.M."/>
            <person name="Rose M."/>
            <person name="Ruzzi M."/>
            <person name="Saliola M."/>
            <person name="Sanchez-Perez M."/>
            <person name="Schaefer B."/>
            <person name="Schaefer M."/>
            <person name="Scharfe M."/>
            <person name="Schmidheini T."/>
            <person name="Schreer A."/>
            <person name="Skala J."/>
            <person name="Souciet J.-L."/>
            <person name="Steensma H.Y."/>
            <person name="Talla E."/>
            <person name="Thierry A."/>
            <person name="Vandenbol M."/>
            <person name="van der Aart Q.J.M."/>
            <person name="Van Dyck L."/>
            <person name="Vanoni M."/>
            <person name="Verhasselt P."/>
            <person name="Voet M."/>
            <person name="Volckaert G."/>
            <person name="Wambutt R."/>
            <person name="Watson M.D."/>
            <person name="Weber N."/>
            <person name="Wedler E."/>
            <person name="Wedler H."/>
            <person name="Wipfli P."/>
            <person name="Wolf K."/>
            <person name="Wright L.F."/>
            <person name="Zaccaria P."/>
            <person name="Zimmermann M."/>
            <person name="Zollner A."/>
            <person name="Kleine K."/>
        </authorList>
    </citation>
    <scope>NUCLEOTIDE SEQUENCE [LARGE SCALE GENOMIC DNA]</scope>
    <source>
        <strain>ATCC 204508 / S288c</strain>
    </source>
</reference>
<reference key="4">
    <citation type="journal article" date="2014" name="G3 (Bethesda)">
        <title>The reference genome sequence of Saccharomyces cerevisiae: Then and now.</title>
        <authorList>
            <person name="Engel S.R."/>
            <person name="Dietrich F.S."/>
            <person name="Fisk D.G."/>
            <person name="Binkley G."/>
            <person name="Balakrishnan R."/>
            <person name="Costanzo M.C."/>
            <person name="Dwight S.S."/>
            <person name="Hitz B.C."/>
            <person name="Karra K."/>
            <person name="Nash R.S."/>
            <person name="Weng S."/>
            <person name="Wong E.D."/>
            <person name="Lloyd P."/>
            <person name="Skrzypek M.S."/>
            <person name="Miyasato S.R."/>
            <person name="Simison M."/>
            <person name="Cherry J.M."/>
        </authorList>
    </citation>
    <scope>GENOME REANNOTATION</scope>
    <source>
        <strain>ATCC 204508 / S288c</strain>
    </source>
</reference>
<reference key="5">
    <citation type="journal article" date="2007" name="Genome Res.">
        <title>Approaching a complete repository of sequence-verified protein-encoding clones for Saccharomyces cerevisiae.</title>
        <authorList>
            <person name="Hu Y."/>
            <person name="Rolfs A."/>
            <person name="Bhullar B."/>
            <person name="Murthy T.V.S."/>
            <person name="Zhu C."/>
            <person name="Berger M.F."/>
            <person name="Camargo A.A."/>
            <person name="Kelley F."/>
            <person name="McCarron S."/>
            <person name="Jepson D."/>
            <person name="Richardson A."/>
            <person name="Raphael J."/>
            <person name="Moreira D."/>
            <person name="Taycher E."/>
            <person name="Zuo D."/>
            <person name="Mohr S."/>
            <person name="Kane M.F."/>
            <person name="Williamson J."/>
            <person name="Simpson A.J.G."/>
            <person name="Bulyk M.L."/>
            <person name="Harlow E."/>
            <person name="Marsischky G."/>
            <person name="Kolodner R.D."/>
            <person name="LaBaer J."/>
        </authorList>
    </citation>
    <scope>NUCLEOTIDE SEQUENCE [GENOMIC DNA]</scope>
    <source>
        <strain>ATCC 204508 / S288c</strain>
    </source>
</reference>
<reference key="6">
    <citation type="journal article" date="1998" name="J. Bacteriol.">
        <title>New potential cell wall glucanases of Saccharomyces cerevisiae and their involvement in mating.</title>
        <authorList>
            <person name="Cappellaro C."/>
            <person name="Mrsa V."/>
            <person name="Tanner W."/>
        </authorList>
    </citation>
    <scope>PROTEIN SEQUENCE OF 24-34</scope>
    <scope>SUBCELLULAR LOCATION</scope>
    <source>
        <strain>ATCC 96099 / S288c / SEY6210</strain>
    </source>
</reference>
<reference key="7">
    <citation type="journal article" date="1996" name="FEMS Microbiol. Lett.">
        <title>Protein expression during exponential growth in 0.7 M NaCl medium of Saccharomyces cerevisiae.</title>
        <authorList>
            <person name="Norbeck J."/>
            <person name="Blomberg A."/>
        </authorList>
    </citation>
    <scope>PROTEIN SEQUENCE OF 24-31</scope>
    <source>
        <strain>ATCC 38531 / Y41</strain>
    </source>
</reference>
<reference key="8">
    <citation type="journal article" date="2003" name="Nature">
        <title>Global analysis of protein expression in yeast.</title>
        <authorList>
            <person name="Ghaemmaghami S."/>
            <person name="Huh W.-K."/>
            <person name="Bower K."/>
            <person name="Howson R.W."/>
            <person name="Belle A."/>
            <person name="Dephoure N."/>
            <person name="O'Shea E.K."/>
            <person name="Weissman J.S."/>
        </authorList>
    </citation>
    <scope>LEVEL OF PROTEIN EXPRESSION [LARGE SCALE ANALYSIS]</scope>
</reference>